<dbReference type="EMBL" id="AE005174">
    <property type="protein sequence ID" value="AAG56528.1"/>
    <property type="status" value="ALT_INIT"/>
    <property type="molecule type" value="Genomic_DNA"/>
</dbReference>
<dbReference type="EMBL" id="BA000007">
    <property type="status" value="NOT_ANNOTATED_CDS"/>
    <property type="molecule type" value="Genomic_DNA"/>
</dbReference>
<dbReference type="PIR" id="D85758">
    <property type="entry name" value="D85758"/>
</dbReference>
<dbReference type="RefSeq" id="WP_001288364.1">
    <property type="nucleotide sequence ID" value="NZ_VOAI01000015.1"/>
</dbReference>
<dbReference type="SMR" id="Q8X3T5"/>
<dbReference type="STRING" id="155864.Z2519"/>
<dbReference type="KEGG" id="ece:Z2519"/>
<dbReference type="PATRIC" id="fig|83334.175.peg.1326"/>
<dbReference type="OMA" id="AQPKAPW"/>
<dbReference type="Proteomes" id="UP000000558">
    <property type="component" value="Chromosome"/>
</dbReference>
<dbReference type="Proteomes" id="UP000002519">
    <property type="component" value="Chromosome"/>
</dbReference>
<dbReference type="HAMAP" id="MF_01641">
    <property type="entry name" value="UPF0509"/>
    <property type="match status" value="1"/>
</dbReference>
<dbReference type="InterPro" id="IPR020887">
    <property type="entry name" value="UPF0509"/>
</dbReference>
<dbReference type="NCBIfam" id="NF010179">
    <property type="entry name" value="PRK13658.1"/>
    <property type="match status" value="1"/>
</dbReference>
<dbReference type="Pfam" id="PF23675">
    <property type="entry name" value="YciZ"/>
    <property type="match status" value="1"/>
</dbReference>
<gene>
    <name type="primary">yciZ</name>
    <name type="ordered locus">Z2519</name>
    <name type="ordered locus">ECs1857.1</name>
</gene>
<reference key="1">
    <citation type="journal article" date="2001" name="Nature">
        <title>Genome sequence of enterohaemorrhagic Escherichia coli O157:H7.</title>
        <authorList>
            <person name="Perna N.T."/>
            <person name="Plunkett G. III"/>
            <person name="Burland V."/>
            <person name="Mau B."/>
            <person name="Glasner J.D."/>
            <person name="Rose D.J."/>
            <person name="Mayhew G.F."/>
            <person name="Evans P.S."/>
            <person name="Gregor J."/>
            <person name="Kirkpatrick H.A."/>
            <person name="Posfai G."/>
            <person name="Hackett J."/>
            <person name="Klink S."/>
            <person name="Boutin A."/>
            <person name="Shao Y."/>
            <person name="Miller L."/>
            <person name="Grotbeck E.J."/>
            <person name="Davis N.W."/>
            <person name="Lim A."/>
            <person name="Dimalanta E.T."/>
            <person name="Potamousis K."/>
            <person name="Apodaca J."/>
            <person name="Anantharaman T.S."/>
            <person name="Lin J."/>
            <person name="Yen G."/>
            <person name="Schwartz D.C."/>
            <person name="Welch R.A."/>
            <person name="Blattner F.R."/>
        </authorList>
    </citation>
    <scope>NUCLEOTIDE SEQUENCE [LARGE SCALE GENOMIC DNA]</scope>
    <source>
        <strain>O157:H7 / EDL933 / ATCC 700927 / EHEC</strain>
    </source>
</reference>
<reference key="2">
    <citation type="journal article" date="2001" name="DNA Res.">
        <title>Complete genome sequence of enterohemorrhagic Escherichia coli O157:H7 and genomic comparison with a laboratory strain K-12.</title>
        <authorList>
            <person name="Hayashi T."/>
            <person name="Makino K."/>
            <person name="Ohnishi M."/>
            <person name="Kurokawa K."/>
            <person name="Ishii K."/>
            <person name="Yokoyama K."/>
            <person name="Han C.-G."/>
            <person name="Ohtsubo E."/>
            <person name="Nakayama K."/>
            <person name="Murata T."/>
            <person name="Tanaka M."/>
            <person name="Tobe T."/>
            <person name="Iida T."/>
            <person name="Takami H."/>
            <person name="Honda T."/>
            <person name="Sasakawa C."/>
            <person name="Ogasawara N."/>
            <person name="Yasunaga T."/>
            <person name="Kuhara S."/>
            <person name="Shiba T."/>
            <person name="Hattori M."/>
            <person name="Shinagawa H."/>
        </authorList>
    </citation>
    <scope>NUCLEOTIDE SEQUENCE [LARGE SCALE GENOMIC DNA]</scope>
    <source>
        <strain>O157:H7 / Sakai / RIMD 0509952 / EHEC</strain>
    </source>
</reference>
<feature type="chain" id="PRO_0000312008" description="UPF0509 protein YciZ">
    <location>
        <begin position="1"/>
        <end position="57"/>
    </location>
</feature>
<organism>
    <name type="scientific">Escherichia coli O157:H7</name>
    <dbReference type="NCBI Taxonomy" id="83334"/>
    <lineage>
        <taxon>Bacteria</taxon>
        <taxon>Pseudomonadati</taxon>
        <taxon>Pseudomonadota</taxon>
        <taxon>Gammaproteobacteria</taxon>
        <taxon>Enterobacterales</taxon>
        <taxon>Enterobacteriaceae</taxon>
        <taxon>Escherichia</taxon>
    </lineage>
</organism>
<comment type="similarity">
    <text evidence="1">Belongs to the UPF0509 family.</text>
</comment>
<comment type="sequence caution" evidence="1">
    <conflict type="erroneous initiation">
        <sequence resource="EMBL-CDS" id="AAG56528"/>
    </conflict>
</comment>
<accession>Q8X3T5</accession>
<sequence length="57" mass="6499">MSEFDAQRVAERIDIVLDILVADDYHSAIHNLEILKAELLRQVAESTPDIPKAPWEI</sequence>
<keyword id="KW-1185">Reference proteome</keyword>
<evidence type="ECO:0000305" key="1"/>
<proteinExistence type="inferred from homology"/>
<name>YCIZ_ECO57</name>
<protein>
    <recommendedName>
        <fullName>UPF0509 protein YciZ</fullName>
    </recommendedName>
</protein>